<evidence type="ECO:0000255" key="1">
    <source>
        <dbReference type="HAMAP-Rule" id="MF_00014"/>
    </source>
</evidence>
<comment type="function">
    <text evidence="1">An accessory protein needed during the final step in the assembly of 30S ribosomal subunit, possibly for assembly of the head region. Essential for efficient processing of 16S rRNA. May be needed both before and after RbfA during the maturation of 16S rRNA. It has affinity for free ribosomal 30S subunits but not for 70S ribosomes.</text>
</comment>
<comment type="subunit">
    <text evidence="1">Binds ribosomal protein uS19.</text>
</comment>
<comment type="subcellular location">
    <subcellularLocation>
        <location evidence="1">Cytoplasm</location>
    </subcellularLocation>
</comment>
<comment type="domain">
    <text evidence="1">The PRC barrel domain binds ribosomal protein uS19.</text>
</comment>
<comment type="similarity">
    <text evidence="1">Belongs to the RimM family.</text>
</comment>
<gene>
    <name evidence="1" type="primary">rimM</name>
    <name type="ordered locus">Mpe_A1105</name>
</gene>
<name>RIMM_METPP</name>
<feature type="chain" id="PRO_1000001194" description="Ribosome maturation factor RimM">
    <location>
        <begin position="1"/>
        <end position="193"/>
    </location>
</feature>
<feature type="domain" description="PRC barrel" evidence="1">
    <location>
        <begin position="112"/>
        <end position="193"/>
    </location>
</feature>
<accession>A2SES7</accession>
<proteinExistence type="inferred from homology"/>
<organism>
    <name type="scientific">Methylibium petroleiphilum (strain ATCC BAA-1232 / LMG 22953 / PM1)</name>
    <dbReference type="NCBI Taxonomy" id="420662"/>
    <lineage>
        <taxon>Bacteria</taxon>
        <taxon>Pseudomonadati</taxon>
        <taxon>Pseudomonadota</taxon>
        <taxon>Betaproteobacteria</taxon>
        <taxon>Burkholderiales</taxon>
        <taxon>Sphaerotilaceae</taxon>
        <taxon>Methylibium</taxon>
    </lineage>
</organism>
<dbReference type="EMBL" id="CP000555">
    <property type="protein sequence ID" value="ABM94066.1"/>
    <property type="molecule type" value="Genomic_DNA"/>
</dbReference>
<dbReference type="RefSeq" id="WP_011828703.1">
    <property type="nucleotide sequence ID" value="NC_008825.1"/>
</dbReference>
<dbReference type="SMR" id="A2SES7"/>
<dbReference type="STRING" id="420662.Mpe_A1105"/>
<dbReference type="KEGG" id="mpt:Mpe_A1105"/>
<dbReference type="eggNOG" id="COG0806">
    <property type="taxonomic scope" value="Bacteria"/>
</dbReference>
<dbReference type="HOGENOM" id="CLU_077636_1_0_4"/>
<dbReference type="Proteomes" id="UP000000366">
    <property type="component" value="Chromosome"/>
</dbReference>
<dbReference type="GO" id="GO:0005737">
    <property type="term" value="C:cytoplasm"/>
    <property type="evidence" value="ECO:0007669"/>
    <property type="project" value="UniProtKB-SubCell"/>
</dbReference>
<dbReference type="GO" id="GO:0005840">
    <property type="term" value="C:ribosome"/>
    <property type="evidence" value="ECO:0007669"/>
    <property type="project" value="InterPro"/>
</dbReference>
<dbReference type="GO" id="GO:0043022">
    <property type="term" value="F:ribosome binding"/>
    <property type="evidence" value="ECO:0007669"/>
    <property type="project" value="InterPro"/>
</dbReference>
<dbReference type="GO" id="GO:0042274">
    <property type="term" value="P:ribosomal small subunit biogenesis"/>
    <property type="evidence" value="ECO:0007669"/>
    <property type="project" value="UniProtKB-UniRule"/>
</dbReference>
<dbReference type="GO" id="GO:0006364">
    <property type="term" value="P:rRNA processing"/>
    <property type="evidence" value="ECO:0007669"/>
    <property type="project" value="UniProtKB-UniRule"/>
</dbReference>
<dbReference type="Gene3D" id="2.30.30.240">
    <property type="entry name" value="PRC-barrel domain"/>
    <property type="match status" value="1"/>
</dbReference>
<dbReference type="Gene3D" id="2.40.30.60">
    <property type="entry name" value="RimM"/>
    <property type="match status" value="1"/>
</dbReference>
<dbReference type="HAMAP" id="MF_00014">
    <property type="entry name" value="Ribosome_mat_RimM"/>
    <property type="match status" value="1"/>
</dbReference>
<dbReference type="InterPro" id="IPR011033">
    <property type="entry name" value="PRC_barrel-like_sf"/>
</dbReference>
<dbReference type="InterPro" id="IPR056792">
    <property type="entry name" value="PRC_RimM"/>
</dbReference>
<dbReference type="InterPro" id="IPR011961">
    <property type="entry name" value="RimM"/>
</dbReference>
<dbReference type="InterPro" id="IPR002676">
    <property type="entry name" value="RimM_N"/>
</dbReference>
<dbReference type="InterPro" id="IPR036976">
    <property type="entry name" value="RimM_N_sf"/>
</dbReference>
<dbReference type="InterPro" id="IPR009000">
    <property type="entry name" value="Transl_B-barrel_sf"/>
</dbReference>
<dbReference type="NCBIfam" id="TIGR02273">
    <property type="entry name" value="16S_RimM"/>
    <property type="match status" value="1"/>
</dbReference>
<dbReference type="PANTHER" id="PTHR33692">
    <property type="entry name" value="RIBOSOME MATURATION FACTOR RIMM"/>
    <property type="match status" value="1"/>
</dbReference>
<dbReference type="PANTHER" id="PTHR33692:SF1">
    <property type="entry name" value="RIBOSOME MATURATION FACTOR RIMM"/>
    <property type="match status" value="1"/>
</dbReference>
<dbReference type="Pfam" id="PF24986">
    <property type="entry name" value="PRC_RimM"/>
    <property type="match status" value="1"/>
</dbReference>
<dbReference type="Pfam" id="PF01782">
    <property type="entry name" value="RimM"/>
    <property type="match status" value="1"/>
</dbReference>
<dbReference type="SUPFAM" id="SSF50346">
    <property type="entry name" value="PRC-barrel domain"/>
    <property type="match status" value="1"/>
</dbReference>
<dbReference type="SUPFAM" id="SSF50447">
    <property type="entry name" value="Translation proteins"/>
    <property type="match status" value="1"/>
</dbReference>
<sequence>MLDDEVVWPEDAIEVGRIVDAWGIKGGIKVLPFSSDPQALFSSRRWFLRPPEKPMGPKAAKPLPTLLRITNAREQGDVIVATAQDVADRNAAEALRGCSVFVSRASFPTADVDEYYWIDLIGLAVVNREGQALGNVADLLDTGAHSVLRVTQVETDDQGRSLERERLIPFVAAYIDAVSLEQRCITVDWGLDF</sequence>
<reference key="1">
    <citation type="journal article" date="2007" name="J. Bacteriol.">
        <title>Whole-genome analysis of the methyl tert-butyl ether-degrading beta-proteobacterium Methylibium petroleiphilum PM1.</title>
        <authorList>
            <person name="Kane S.R."/>
            <person name="Chakicherla A.Y."/>
            <person name="Chain P.S.G."/>
            <person name="Schmidt R."/>
            <person name="Shin M.W."/>
            <person name="Legler T.C."/>
            <person name="Scow K.M."/>
            <person name="Larimer F.W."/>
            <person name="Lucas S.M."/>
            <person name="Richardson P.M."/>
            <person name="Hristova K.R."/>
        </authorList>
    </citation>
    <scope>NUCLEOTIDE SEQUENCE [LARGE SCALE GENOMIC DNA]</scope>
    <source>
        <strain>ATCC BAA-1232 / LMG 22953 / PM1</strain>
    </source>
</reference>
<keyword id="KW-0143">Chaperone</keyword>
<keyword id="KW-0963">Cytoplasm</keyword>
<keyword id="KW-1185">Reference proteome</keyword>
<keyword id="KW-0690">Ribosome biogenesis</keyword>
<keyword id="KW-0698">rRNA processing</keyword>
<protein>
    <recommendedName>
        <fullName evidence="1">Ribosome maturation factor RimM</fullName>
    </recommendedName>
</protein>